<gene>
    <name evidence="1" type="primary">dapE</name>
    <name type="ordered locus">Mrad2831_3149</name>
</gene>
<sequence length="392" mass="41705">MPADHHAPDAALRLAQDLIRCPSVTPEDRGALDVVADALRPAGFAIERPVFAEPGYPDTPNLYARIGQNGPCLVFAGHTDVVPEGEGAWRHDPFAGAVADGMLYGRGAADMKGGVACMLAATLAFLDRRGADFGGSIAFLITGDEEGPAVNGTVKLLDWARRRGERFDHCVLGEPTNPGRLGEMIKIGRRGSLTGKLTVLGRQGHVAYPHKAENPIPGLLRLASALIAEPLDRGTAHFDASNLEFTTVDVGNPATNVIPSTARATFNVRFNDDWTAESLGAEIRRRLEQAAGNAVRFTLDLQPSNAPAFLTRPDAFVTLVAEAIRAETGLTPTLSTTGGTSDARFIKDACPVIEFGLVGETMHQVDECVAVADLERLTAIYGRVLDAYFPGS</sequence>
<name>DAPE_METRJ</name>
<comment type="function">
    <text evidence="1">Catalyzes the hydrolysis of N-succinyl-L,L-diaminopimelic acid (SDAP), forming succinate and LL-2,6-diaminopimelate (DAP), an intermediate involved in the bacterial biosynthesis of lysine and meso-diaminopimelic acid, an essential component of bacterial cell walls.</text>
</comment>
<comment type="catalytic activity">
    <reaction evidence="1">
        <text>N-succinyl-(2S,6S)-2,6-diaminopimelate + H2O = (2S,6S)-2,6-diaminopimelate + succinate</text>
        <dbReference type="Rhea" id="RHEA:22608"/>
        <dbReference type="ChEBI" id="CHEBI:15377"/>
        <dbReference type="ChEBI" id="CHEBI:30031"/>
        <dbReference type="ChEBI" id="CHEBI:57609"/>
        <dbReference type="ChEBI" id="CHEBI:58087"/>
        <dbReference type="EC" id="3.5.1.18"/>
    </reaction>
</comment>
<comment type="cofactor">
    <cofactor evidence="1">
        <name>Zn(2+)</name>
        <dbReference type="ChEBI" id="CHEBI:29105"/>
    </cofactor>
    <cofactor evidence="1">
        <name>Co(2+)</name>
        <dbReference type="ChEBI" id="CHEBI:48828"/>
    </cofactor>
    <text evidence="1">Binds 2 Zn(2+) or Co(2+) ions per subunit.</text>
</comment>
<comment type="pathway">
    <text evidence="1">Amino-acid biosynthesis; L-lysine biosynthesis via DAP pathway; LL-2,6-diaminopimelate from (S)-tetrahydrodipicolinate (succinylase route): step 3/3.</text>
</comment>
<comment type="subunit">
    <text evidence="1">Homodimer.</text>
</comment>
<comment type="similarity">
    <text evidence="1">Belongs to the peptidase M20A family. DapE subfamily.</text>
</comment>
<protein>
    <recommendedName>
        <fullName evidence="1">Succinyl-diaminopimelate desuccinylase</fullName>
        <shortName evidence="1">SDAP desuccinylase</shortName>
        <ecNumber evidence="1">3.5.1.18</ecNumber>
    </recommendedName>
    <alternativeName>
        <fullName evidence="1">N-succinyl-LL-2,6-diaminoheptanedioate amidohydrolase</fullName>
    </alternativeName>
</protein>
<accession>B1M6P0</accession>
<feature type="chain" id="PRO_0000375616" description="Succinyl-diaminopimelate desuccinylase">
    <location>
        <begin position="1"/>
        <end position="392"/>
    </location>
</feature>
<feature type="active site" evidence="1">
    <location>
        <position position="80"/>
    </location>
</feature>
<feature type="active site" description="Proton acceptor" evidence="1">
    <location>
        <position position="145"/>
    </location>
</feature>
<feature type="binding site" evidence="1">
    <location>
        <position position="78"/>
    </location>
    <ligand>
        <name>Zn(2+)</name>
        <dbReference type="ChEBI" id="CHEBI:29105"/>
        <label>1</label>
    </ligand>
</feature>
<feature type="binding site" evidence="1">
    <location>
        <position position="110"/>
    </location>
    <ligand>
        <name>Zn(2+)</name>
        <dbReference type="ChEBI" id="CHEBI:29105"/>
        <label>1</label>
    </ligand>
</feature>
<feature type="binding site" evidence="1">
    <location>
        <position position="110"/>
    </location>
    <ligand>
        <name>Zn(2+)</name>
        <dbReference type="ChEBI" id="CHEBI:29105"/>
        <label>2</label>
    </ligand>
</feature>
<feature type="binding site" evidence="1">
    <location>
        <position position="146"/>
    </location>
    <ligand>
        <name>Zn(2+)</name>
        <dbReference type="ChEBI" id="CHEBI:29105"/>
        <label>2</label>
    </ligand>
</feature>
<feature type="binding site" evidence="1">
    <location>
        <position position="174"/>
    </location>
    <ligand>
        <name>Zn(2+)</name>
        <dbReference type="ChEBI" id="CHEBI:29105"/>
        <label>1</label>
    </ligand>
</feature>
<feature type="binding site" evidence="1">
    <location>
        <position position="363"/>
    </location>
    <ligand>
        <name>Zn(2+)</name>
        <dbReference type="ChEBI" id="CHEBI:29105"/>
        <label>2</label>
    </ligand>
</feature>
<keyword id="KW-0028">Amino-acid biosynthesis</keyword>
<keyword id="KW-0170">Cobalt</keyword>
<keyword id="KW-0220">Diaminopimelate biosynthesis</keyword>
<keyword id="KW-0378">Hydrolase</keyword>
<keyword id="KW-0457">Lysine biosynthesis</keyword>
<keyword id="KW-0479">Metal-binding</keyword>
<keyword id="KW-0862">Zinc</keyword>
<dbReference type="EC" id="3.5.1.18" evidence="1"/>
<dbReference type="EMBL" id="CP001001">
    <property type="protein sequence ID" value="ACB25131.1"/>
    <property type="molecule type" value="Genomic_DNA"/>
</dbReference>
<dbReference type="RefSeq" id="WP_012320096.1">
    <property type="nucleotide sequence ID" value="NC_010505.1"/>
</dbReference>
<dbReference type="SMR" id="B1M6P0"/>
<dbReference type="STRING" id="426355.Mrad2831_3149"/>
<dbReference type="GeneID" id="6139196"/>
<dbReference type="KEGG" id="mrd:Mrad2831_3149"/>
<dbReference type="eggNOG" id="COG0624">
    <property type="taxonomic scope" value="Bacteria"/>
</dbReference>
<dbReference type="HOGENOM" id="CLU_021802_4_0_5"/>
<dbReference type="OrthoDB" id="9809784at2"/>
<dbReference type="UniPathway" id="UPA00034">
    <property type="reaction ID" value="UER00021"/>
</dbReference>
<dbReference type="Proteomes" id="UP000006589">
    <property type="component" value="Chromosome"/>
</dbReference>
<dbReference type="GO" id="GO:0008777">
    <property type="term" value="F:acetylornithine deacetylase activity"/>
    <property type="evidence" value="ECO:0007669"/>
    <property type="project" value="TreeGrafter"/>
</dbReference>
<dbReference type="GO" id="GO:0050897">
    <property type="term" value="F:cobalt ion binding"/>
    <property type="evidence" value="ECO:0007669"/>
    <property type="project" value="UniProtKB-UniRule"/>
</dbReference>
<dbReference type="GO" id="GO:0009014">
    <property type="term" value="F:succinyl-diaminopimelate desuccinylase activity"/>
    <property type="evidence" value="ECO:0007669"/>
    <property type="project" value="UniProtKB-UniRule"/>
</dbReference>
<dbReference type="GO" id="GO:0008270">
    <property type="term" value="F:zinc ion binding"/>
    <property type="evidence" value="ECO:0007669"/>
    <property type="project" value="UniProtKB-UniRule"/>
</dbReference>
<dbReference type="GO" id="GO:0019877">
    <property type="term" value="P:diaminopimelate biosynthetic process"/>
    <property type="evidence" value="ECO:0007669"/>
    <property type="project" value="UniProtKB-UniRule"/>
</dbReference>
<dbReference type="GO" id="GO:0006526">
    <property type="term" value="P:L-arginine biosynthetic process"/>
    <property type="evidence" value="ECO:0007669"/>
    <property type="project" value="TreeGrafter"/>
</dbReference>
<dbReference type="GO" id="GO:0009089">
    <property type="term" value="P:lysine biosynthetic process via diaminopimelate"/>
    <property type="evidence" value="ECO:0007669"/>
    <property type="project" value="UniProtKB-UniRule"/>
</dbReference>
<dbReference type="CDD" id="cd03891">
    <property type="entry name" value="M20_DapE_proteobac"/>
    <property type="match status" value="1"/>
</dbReference>
<dbReference type="Gene3D" id="3.40.630.10">
    <property type="entry name" value="Zn peptidases"/>
    <property type="match status" value="2"/>
</dbReference>
<dbReference type="HAMAP" id="MF_01690">
    <property type="entry name" value="DapE"/>
    <property type="match status" value="1"/>
</dbReference>
<dbReference type="InterPro" id="IPR001261">
    <property type="entry name" value="ArgE/DapE_CS"/>
</dbReference>
<dbReference type="InterPro" id="IPR036264">
    <property type="entry name" value="Bact_exopeptidase_dim_dom"/>
</dbReference>
<dbReference type="InterPro" id="IPR005941">
    <property type="entry name" value="DapE_proteobac"/>
</dbReference>
<dbReference type="InterPro" id="IPR002933">
    <property type="entry name" value="Peptidase_M20"/>
</dbReference>
<dbReference type="InterPro" id="IPR011650">
    <property type="entry name" value="Peptidase_M20_dimer"/>
</dbReference>
<dbReference type="InterPro" id="IPR050072">
    <property type="entry name" value="Peptidase_M20A"/>
</dbReference>
<dbReference type="NCBIfam" id="TIGR01246">
    <property type="entry name" value="dapE_proteo"/>
    <property type="match status" value="1"/>
</dbReference>
<dbReference type="NCBIfam" id="NF009557">
    <property type="entry name" value="PRK13009.1"/>
    <property type="match status" value="1"/>
</dbReference>
<dbReference type="PANTHER" id="PTHR43808">
    <property type="entry name" value="ACETYLORNITHINE DEACETYLASE"/>
    <property type="match status" value="1"/>
</dbReference>
<dbReference type="PANTHER" id="PTHR43808:SF31">
    <property type="entry name" value="N-ACETYL-L-CITRULLINE DEACETYLASE"/>
    <property type="match status" value="1"/>
</dbReference>
<dbReference type="Pfam" id="PF07687">
    <property type="entry name" value="M20_dimer"/>
    <property type="match status" value="1"/>
</dbReference>
<dbReference type="Pfam" id="PF01546">
    <property type="entry name" value="Peptidase_M20"/>
    <property type="match status" value="1"/>
</dbReference>
<dbReference type="SUPFAM" id="SSF55031">
    <property type="entry name" value="Bacterial exopeptidase dimerisation domain"/>
    <property type="match status" value="1"/>
</dbReference>
<dbReference type="SUPFAM" id="SSF53187">
    <property type="entry name" value="Zn-dependent exopeptidases"/>
    <property type="match status" value="1"/>
</dbReference>
<dbReference type="PROSITE" id="PS00759">
    <property type="entry name" value="ARGE_DAPE_CPG2_2"/>
    <property type="match status" value="1"/>
</dbReference>
<reference key="1">
    <citation type="submission" date="2008-03" db="EMBL/GenBank/DDBJ databases">
        <title>Complete sequence of chromosome of Methylobacterium radiotolerans JCM 2831.</title>
        <authorList>
            <consortium name="US DOE Joint Genome Institute"/>
            <person name="Copeland A."/>
            <person name="Lucas S."/>
            <person name="Lapidus A."/>
            <person name="Glavina del Rio T."/>
            <person name="Dalin E."/>
            <person name="Tice H."/>
            <person name="Bruce D."/>
            <person name="Goodwin L."/>
            <person name="Pitluck S."/>
            <person name="Kiss H."/>
            <person name="Brettin T."/>
            <person name="Detter J.C."/>
            <person name="Han C."/>
            <person name="Kuske C.R."/>
            <person name="Schmutz J."/>
            <person name="Larimer F."/>
            <person name="Land M."/>
            <person name="Hauser L."/>
            <person name="Kyrpides N."/>
            <person name="Mikhailova N."/>
            <person name="Marx C.J."/>
            <person name="Richardson P."/>
        </authorList>
    </citation>
    <scope>NUCLEOTIDE SEQUENCE [LARGE SCALE GENOMIC DNA]</scope>
    <source>
        <strain>ATCC 27329 / DSM 1819 / JCM 2831 / NBRC 15690 / NCIMB 10815 / 0-1</strain>
    </source>
</reference>
<evidence type="ECO:0000255" key="1">
    <source>
        <dbReference type="HAMAP-Rule" id="MF_01690"/>
    </source>
</evidence>
<organism>
    <name type="scientific">Methylobacterium radiotolerans (strain ATCC 27329 / DSM 1819 / JCM 2831 / NBRC 15690 / NCIMB 10815 / 0-1)</name>
    <dbReference type="NCBI Taxonomy" id="426355"/>
    <lineage>
        <taxon>Bacteria</taxon>
        <taxon>Pseudomonadati</taxon>
        <taxon>Pseudomonadota</taxon>
        <taxon>Alphaproteobacteria</taxon>
        <taxon>Hyphomicrobiales</taxon>
        <taxon>Methylobacteriaceae</taxon>
        <taxon>Methylobacterium</taxon>
    </lineage>
</organism>
<proteinExistence type="inferred from homology"/>